<name>CCD22_DICDI</name>
<accession>Q54MP2</accession>
<sequence>MDEADGIILITLKDLGCEIEENETIKNFDSEMVYKCILAYLRVINEQKVINLTNTLPKNMSARVNACSLIANIIKDSGYRSELSYHNLLYPNVNDIRKIFIFLGQLLPKKEVESGGVSIQKLEDQICQYLQGCVKESWIPYFCPFSKRIPGNYSTATLFTTTGGNLRIPSRGRQLKVTPGLEQYYSQYLEPLTLQTNRFEDIAPSVFEYNLSIYAEAQERDNEWNDKGVSSGMNPIDYRKNKQKQVLSKMNDSIRQSIIDGGNNQISSNCNSGDSFLDIISEFRGNSLDVGGQFNRKKAFTNELNNNNNNNNDSTTNTNKVETEIETEEQRQLKRQAEIDALQSQIDEISESIQLHNKEMLDFLSLMRQSESENLEQDQQREVLEKQYKIKKKTFSLLDDAEGNMKELQSLCNQTSSNLLEMSGEWEKVRKPIIEKYRSLKDKQNNQADETKSKLDRIKEMRILIKKLVSEVQQKDDQFQQLQDQYKQAPKDSNRSQYTRRILETVKNIKKQKVDIDKVLLDTKNLQKEINTITDTAVRTFELVKDLLYNDAKKDQTAKQAIKSFAIIDDKFQKLFKTIDETGNFQNNILNLNSKIEHVSQKTNTLNSDRVVQDLKNIKSENQSLIKQIKTLIETKN</sequence>
<evidence type="ECO:0000255" key="1"/>
<evidence type="ECO:0000305" key="2"/>
<comment type="similarity">
    <text evidence="2">Belongs to the CCDC22 family.</text>
</comment>
<protein>
    <recommendedName>
        <fullName>Coiled-coil domain-containing protein 22 homolog</fullName>
    </recommendedName>
</protein>
<proteinExistence type="inferred from homology"/>
<organism>
    <name type="scientific">Dictyostelium discoideum</name>
    <name type="common">Social amoeba</name>
    <dbReference type="NCBI Taxonomy" id="44689"/>
    <lineage>
        <taxon>Eukaryota</taxon>
        <taxon>Amoebozoa</taxon>
        <taxon>Evosea</taxon>
        <taxon>Eumycetozoa</taxon>
        <taxon>Dictyostelia</taxon>
        <taxon>Dictyosteliales</taxon>
        <taxon>Dictyosteliaceae</taxon>
        <taxon>Dictyostelium</taxon>
    </lineage>
</organism>
<feature type="chain" id="PRO_0000338403" description="Coiled-coil domain-containing protein 22 homolog">
    <location>
        <begin position="1"/>
        <end position="637"/>
    </location>
</feature>
<feature type="coiled-coil region" evidence="1">
    <location>
        <begin position="322"/>
        <end position="489"/>
    </location>
</feature>
<feature type="coiled-coil region" evidence="1">
    <location>
        <begin position="608"/>
        <end position="637"/>
    </location>
</feature>
<dbReference type="EMBL" id="AAFI02000080">
    <property type="protein sequence ID" value="EAL64528.1"/>
    <property type="molecule type" value="Genomic_DNA"/>
</dbReference>
<dbReference type="RefSeq" id="XP_638035.1">
    <property type="nucleotide sequence ID" value="XM_632943.1"/>
</dbReference>
<dbReference type="SMR" id="Q54MP2"/>
<dbReference type="FunCoup" id="Q54MP2">
    <property type="interactions" value="14"/>
</dbReference>
<dbReference type="STRING" id="44689.Q54MP2"/>
<dbReference type="PaxDb" id="44689-DDB0186696"/>
<dbReference type="EnsemblProtists" id="EAL64528">
    <property type="protein sequence ID" value="EAL64528"/>
    <property type="gene ID" value="DDB_G0285813"/>
</dbReference>
<dbReference type="GeneID" id="8625299"/>
<dbReference type="KEGG" id="ddi:DDB_G0285813"/>
<dbReference type="dictyBase" id="DDB_G0285813"/>
<dbReference type="VEuPathDB" id="AmoebaDB:DDB_G0285813"/>
<dbReference type="eggNOG" id="KOG1937">
    <property type="taxonomic scope" value="Eukaryota"/>
</dbReference>
<dbReference type="HOGENOM" id="CLU_024231_1_0_1"/>
<dbReference type="InParanoid" id="Q54MP2"/>
<dbReference type="OMA" id="KFEQHIQ"/>
<dbReference type="PhylomeDB" id="Q54MP2"/>
<dbReference type="Reactome" id="R-DDI-8951664">
    <property type="pathway name" value="Neddylation"/>
</dbReference>
<dbReference type="PRO" id="PR:Q54MP2"/>
<dbReference type="Proteomes" id="UP000002195">
    <property type="component" value="Chromosome 4"/>
</dbReference>
<dbReference type="GO" id="GO:0097602">
    <property type="term" value="F:cullin family protein binding"/>
    <property type="evidence" value="ECO:0000318"/>
    <property type="project" value="GO_Central"/>
</dbReference>
<dbReference type="GO" id="GO:2000060">
    <property type="term" value="P:positive regulation of ubiquitin-dependent protein catabolic process"/>
    <property type="evidence" value="ECO:0000318"/>
    <property type="project" value="GO_Central"/>
</dbReference>
<dbReference type="InterPro" id="IPR008530">
    <property type="entry name" value="CCDC22"/>
</dbReference>
<dbReference type="InterPro" id="IPR048348">
    <property type="entry name" value="CCDC22_CC"/>
</dbReference>
<dbReference type="InterPro" id="IPR048349">
    <property type="entry name" value="CCDC22_N"/>
</dbReference>
<dbReference type="PANTHER" id="PTHR15668:SF4">
    <property type="entry name" value="COILED-COIL DOMAIN-CONTAINING PROTEIN 22"/>
    <property type="match status" value="1"/>
</dbReference>
<dbReference type="PANTHER" id="PTHR15668">
    <property type="entry name" value="JM1 PROTEIN"/>
    <property type="match status" value="1"/>
</dbReference>
<dbReference type="Pfam" id="PF05667">
    <property type="entry name" value="CCDC22_CC"/>
    <property type="match status" value="1"/>
</dbReference>
<dbReference type="Pfam" id="PF21674">
    <property type="entry name" value="CCDC22_N"/>
    <property type="match status" value="1"/>
</dbReference>
<keyword id="KW-0175">Coiled coil</keyword>
<keyword id="KW-1185">Reference proteome</keyword>
<reference key="1">
    <citation type="journal article" date="2005" name="Nature">
        <title>The genome of the social amoeba Dictyostelium discoideum.</title>
        <authorList>
            <person name="Eichinger L."/>
            <person name="Pachebat J.A."/>
            <person name="Gloeckner G."/>
            <person name="Rajandream M.A."/>
            <person name="Sucgang R."/>
            <person name="Berriman M."/>
            <person name="Song J."/>
            <person name="Olsen R."/>
            <person name="Szafranski K."/>
            <person name="Xu Q."/>
            <person name="Tunggal B."/>
            <person name="Kummerfeld S."/>
            <person name="Madera M."/>
            <person name="Konfortov B.A."/>
            <person name="Rivero F."/>
            <person name="Bankier A.T."/>
            <person name="Lehmann R."/>
            <person name="Hamlin N."/>
            <person name="Davies R."/>
            <person name="Gaudet P."/>
            <person name="Fey P."/>
            <person name="Pilcher K."/>
            <person name="Chen G."/>
            <person name="Saunders D."/>
            <person name="Sodergren E.J."/>
            <person name="Davis P."/>
            <person name="Kerhornou A."/>
            <person name="Nie X."/>
            <person name="Hall N."/>
            <person name="Anjard C."/>
            <person name="Hemphill L."/>
            <person name="Bason N."/>
            <person name="Farbrother P."/>
            <person name="Desany B."/>
            <person name="Just E."/>
            <person name="Morio T."/>
            <person name="Rost R."/>
            <person name="Churcher C.M."/>
            <person name="Cooper J."/>
            <person name="Haydock S."/>
            <person name="van Driessche N."/>
            <person name="Cronin A."/>
            <person name="Goodhead I."/>
            <person name="Muzny D.M."/>
            <person name="Mourier T."/>
            <person name="Pain A."/>
            <person name="Lu M."/>
            <person name="Harper D."/>
            <person name="Lindsay R."/>
            <person name="Hauser H."/>
            <person name="James K.D."/>
            <person name="Quiles M."/>
            <person name="Madan Babu M."/>
            <person name="Saito T."/>
            <person name="Buchrieser C."/>
            <person name="Wardroper A."/>
            <person name="Felder M."/>
            <person name="Thangavelu M."/>
            <person name="Johnson D."/>
            <person name="Knights A."/>
            <person name="Loulseged H."/>
            <person name="Mungall K.L."/>
            <person name="Oliver K."/>
            <person name="Price C."/>
            <person name="Quail M.A."/>
            <person name="Urushihara H."/>
            <person name="Hernandez J."/>
            <person name="Rabbinowitsch E."/>
            <person name="Steffen D."/>
            <person name="Sanders M."/>
            <person name="Ma J."/>
            <person name="Kohara Y."/>
            <person name="Sharp S."/>
            <person name="Simmonds M.N."/>
            <person name="Spiegler S."/>
            <person name="Tivey A."/>
            <person name="Sugano S."/>
            <person name="White B."/>
            <person name="Walker D."/>
            <person name="Woodward J.R."/>
            <person name="Winckler T."/>
            <person name="Tanaka Y."/>
            <person name="Shaulsky G."/>
            <person name="Schleicher M."/>
            <person name="Weinstock G.M."/>
            <person name="Rosenthal A."/>
            <person name="Cox E.C."/>
            <person name="Chisholm R.L."/>
            <person name="Gibbs R.A."/>
            <person name="Loomis W.F."/>
            <person name="Platzer M."/>
            <person name="Kay R.R."/>
            <person name="Williams J.G."/>
            <person name="Dear P.H."/>
            <person name="Noegel A.A."/>
            <person name="Barrell B.G."/>
            <person name="Kuspa A."/>
        </authorList>
    </citation>
    <scope>NUCLEOTIDE SEQUENCE [LARGE SCALE GENOMIC DNA]</scope>
    <source>
        <strain>AX4</strain>
    </source>
</reference>
<gene>
    <name type="ORF">DDB_G0285813</name>
</gene>